<evidence type="ECO:0000255" key="1">
    <source>
        <dbReference type="HAMAP-Rule" id="MF_00386"/>
    </source>
</evidence>
<dbReference type="EMBL" id="CP001172">
    <property type="protein sequence ID" value="ACJ58016.1"/>
    <property type="molecule type" value="Genomic_DNA"/>
</dbReference>
<dbReference type="HOGENOM" id="CLU_144811_2_2_6"/>
<dbReference type="Proteomes" id="UP000006924">
    <property type="component" value="Chromosome"/>
</dbReference>
<dbReference type="GO" id="GO:0005886">
    <property type="term" value="C:plasma membrane"/>
    <property type="evidence" value="ECO:0007669"/>
    <property type="project" value="UniProtKB-SubCell"/>
</dbReference>
<dbReference type="HAMAP" id="MF_00386">
    <property type="entry name" value="UPF0161_YidD"/>
    <property type="match status" value="1"/>
</dbReference>
<dbReference type="InterPro" id="IPR002696">
    <property type="entry name" value="Membr_insert_effic_factor_YidD"/>
</dbReference>
<dbReference type="NCBIfam" id="TIGR00278">
    <property type="entry name" value="membrane protein insertion efficiency factor YidD"/>
    <property type="match status" value="1"/>
</dbReference>
<dbReference type="PANTHER" id="PTHR33383">
    <property type="entry name" value="MEMBRANE PROTEIN INSERTION EFFICIENCY FACTOR-RELATED"/>
    <property type="match status" value="1"/>
</dbReference>
<dbReference type="PANTHER" id="PTHR33383:SF1">
    <property type="entry name" value="MEMBRANE PROTEIN INSERTION EFFICIENCY FACTOR-RELATED"/>
    <property type="match status" value="1"/>
</dbReference>
<dbReference type="Pfam" id="PF01809">
    <property type="entry name" value="YidD"/>
    <property type="match status" value="1"/>
</dbReference>
<dbReference type="SMART" id="SM01234">
    <property type="entry name" value="Haemolytic"/>
    <property type="match status" value="1"/>
</dbReference>
<organism>
    <name type="scientific">Acinetobacter baumannii (strain AB307-0294)</name>
    <dbReference type="NCBI Taxonomy" id="557600"/>
    <lineage>
        <taxon>Bacteria</taxon>
        <taxon>Pseudomonadati</taxon>
        <taxon>Pseudomonadota</taxon>
        <taxon>Gammaproteobacteria</taxon>
        <taxon>Moraxellales</taxon>
        <taxon>Moraxellaceae</taxon>
        <taxon>Acinetobacter</taxon>
        <taxon>Acinetobacter calcoaceticus/baumannii complex</taxon>
    </lineage>
</organism>
<gene>
    <name type="ordered locus">ABBFA_003529</name>
</gene>
<protein>
    <recommendedName>
        <fullName evidence="1">Putative membrane protein insertion efficiency factor</fullName>
    </recommendedName>
</protein>
<accession>B7H341</accession>
<name>YIDD_ACIB3</name>
<feature type="chain" id="PRO_1000122606" description="Putative membrane protein insertion efficiency factor">
    <location>
        <begin position="1"/>
        <end position="106"/>
    </location>
</feature>
<reference key="1">
    <citation type="journal article" date="2008" name="J. Bacteriol.">
        <title>Comparative genome sequence analysis of multidrug-resistant Acinetobacter baumannii.</title>
        <authorList>
            <person name="Adams M.D."/>
            <person name="Goglin K."/>
            <person name="Molyneaux N."/>
            <person name="Hujer K.M."/>
            <person name="Lavender H."/>
            <person name="Jamison J.J."/>
            <person name="MacDonald I.J."/>
            <person name="Martin K.M."/>
            <person name="Russo T."/>
            <person name="Campagnari A.A."/>
            <person name="Hujer A.M."/>
            <person name="Bonomo R.A."/>
            <person name="Gill S.R."/>
        </authorList>
    </citation>
    <scope>NUCLEOTIDE SEQUENCE [LARGE SCALE GENOMIC DNA]</scope>
    <source>
        <strain>AB307-0294</strain>
    </source>
</reference>
<keyword id="KW-0997">Cell inner membrane</keyword>
<keyword id="KW-1003">Cell membrane</keyword>
<keyword id="KW-0472">Membrane</keyword>
<comment type="function">
    <text evidence="1">Could be involved in insertion of integral membrane proteins into the membrane.</text>
</comment>
<comment type="subcellular location">
    <subcellularLocation>
        <location evidence="1">Cell inner membrane</location>
        <topology evidence="1">Peripheral membrane protein</topology>
        <orientation evidence="1">Cytoplasmic side</orientation>
    </subcellularLocation>
</comment>
<comment type="similarity">
    <text evidence="1">Belongs to the UPF0161 family.</text>
</comment>
<proteinExistence type="inferred from homology"/>
<sequence>MVRILRWFIRLYQIAISPLLGPRCRYIPTCSQYALEALQTHGAIKGVWLSSKRICRCHPWGGSGYDPVPPKAIRFISFHQIDSQTHHVAVPFRDRLMKQNLSNHLG</sequence>